<accession>A0A0E3D8L0</accession>
<dbReference type="EC" id="5.4.99.-" evidence="1"/>
<dbReference type="EMBL" id="KC963408">
    <property type="protein sequence ID" value="AGZ20193.1"/>
    <property type="molecule type" value="Genomic_DNA"/>
</dbReference>
<dbReference type="SMR" id="A0A0E3D8L0"/>
<dbReference type="GO" id="GO:0016020">
    <property type="term" value="C:membrane"/>
    <property type="evidence" value="ECO:0007669"/>
    <property type="project" value="UniProtKB-SubCell"/>
</dbReference>
<dbReference type="GO" id="GO:0016853">
    <property type="term" value="F:isomerase activity"/>
    <property type="evidence" value="ECO:0007669"/>
    <property type="project" value="UniProtKB-KW"/>
</dbReference>
<organism>
    <name type="scientific">Penicillium crustosum</name>
    <name type="common">Blue mold fungus</name>
    <dbReference type="NCBI Taxonomy" id="36656"/>
    <lineage>
        <taxon>Eukaryota</taxon>
        <taxon>Fungi</taxon>
        <taxon>Dikarya</taxon>
        <taxon>Ascomycota</taxon>
        <taxon>Pezizomycotina</taxon>
        <taxon>Eurotiomycetes</taxon>
        <taxon>Eurotiomycetidae</taxon>
        <taxon>Eurotiales</taxon>
        <taxon>Aspergillaceae</taxon>
        <taxon>Penicillium</taxon>
    </lineage>
</organism>
<name>PENA_PENCR</name>
<gene>
    <name evidence="4" type="primary">penA</name>
</gene>
<reference key="1">
    <citation type="journal article" date="2015" name="Toxins">
        <title>Molecular cloning and functional analysis of gene clusters for the biosynthesis of indole-diterpenes in Penicillium crustosum and P. janthinellum.</title>
        <authorList>
            <person name="Nicholson M.J."/>
            <person name="Eaton C.J."/>
            <person name="Starkel C."/>
            <person name="Tapper B.A."/>
            <person name="Cox M.P."/>
            <person name="Scott B."/>
        </authorList>
    </citation>
    <scope>NUCLEOTIDE SEQUENCE [GENOMIC DNA]</scope>
    <scope>IDENTIFICATION</scope>
    <scope>FUNCTION</scope>
    <scope>PATHWAY</scope>
    <source>
        <strain>PN2402</strain>
    </source>
</reference>
<proteinExistence type="inferred from homology"/>
<keyword id="KW-0413">Isomerase</keyword>
<keyword id="KW-0472">Membrane</keyword>
<keyword id="KW-0812">Transmembrane</keyword>
<keyword id="KW-1133">Transmembrane helix</keyword>
<sequence length="368" mass="40724">MSHVVRPILIILASVAIYTKYYLSFQNGFIDLLSTMGSQGSLAGLQDGLRSHYTGLDPLDKFLKACNVFFWPIFHGTSPALSLYAIAFAGSMIPMWLILLMHTCVKSSIVEIVMINALTGLLVQGIGPGVMMCVLLAMRSTSMEEFAVTSIPAVSILGPNDLPLSLVVCYILPLALSSLPAPASISVPSKQLFIASWQGWPLYIALAVGIAHSLRYGYRRSRPQQLFRHAYAFALACSIISHVGLLLISFLSIYPKSPFLSLHSADLHPQSLLVPRLPWQEVKITSLESGVLRFLHWDYSISSTGALLWCYDVYWEDRMRGKGWIAFFSLSSQLATMSLAFGPCSVALALYWTALSKNLMKNEHVRKR</sequence>
<feature type="chain" id="PRO_0000446541" description="Terpene cyclase penA">
    <location>
        <begin position="1"/>
        <end position="368"/>
    </location>
</feature>
<feature type="transmembrane region" description="Helical" evidence="2">
    <location>
        <begin position="10"/>
        <end position="30"/>
    </location>
</feature>
<feature type="transmembrane region" description="Helical" evidence="2">
    <location>
        <begin position="81"/>
        <end position="101"/>
    </location>
</feature>
<feature type="transmembrane region" description="Helical" evidence="2">
    <location>
        <begin position="118"/>
        <end position="138"/>
    </location>
</feature>
<feature type="transmembrane region" description="Helical" evidence="2">
    <location>
        <begin position="192"/>
        <end position="212"/>
    </location>
</feature>
<feature type="transmembrane region" description="Helical" evidence="2">
    <location>
        <begin position="233"/>
        <end position="253"/>
    </location>
</feature>
<feature type="transmembrane region" description="Helical" evidence="2">
    <location>
        <begin position="334"/>
        <end position="354"/>
    </location>
</feature>
<comment type="function">
    <text evidence="3 6">Part of the gene cluster that mediates the biosynthesis of the indole diterpenes penitrems (PubMed:26213965). The geranylgeranyl diphosphate (GGPP) synthase penG catalyzes the first step in penitrem biosynthesis via conversion of farnesyl pyrophosphate and isopentyl pyrophosphate into geranylgeranyl pyrophosphate (GGPP) (Probable). Condensation of indole-3-glycerol phosphate with GGPP by the prenyl transferase penC then forms 3-geranylgeranylindole (3-GGI) (Probable). Epoxidation by the FAD-dependent monooxygenase penM leads to a epoxidized-GGI that is substrate of the terpene cyclase penB for cyclization to yield paspaline (Probable). Paspaline is subsequently converted to 13-desoxypaxilline by the cytochrome P450 monooxygenase penP, the latter being then converted to paxilline by the cytochrome P450 monooxygenase penQ (PubMed:26213965). Paxilline is converted to beta-paxitriol via C-10 ketoreduction by the short-chain dehydrogenase PC-15 which can be monoprenylated at the C-20 by the indole diterpene prenyltransferase penD (Probable). A two-step elimination (acetylation and elimination) process performed by the O-acetyltransferase PC-16 and the P.simplicissimum ptmI-ortholog not yet identified in P.crustosum, leads to the production of the prenylated form of penijanthine (Probable). The FAD-linked oxidoreductase ptmO then converts the prenylated form of penijanthine into PC-M5 which is in turn transformed into PC-M4 by the aromatic dimethylallyltransferase PC-22 (Probable). A series of oxidation steps involving 4 cytochrome P450 monooxygenases (PC-21, PC-05, PC-23, PC-20) and a FAD-dependent monooxygenase (PC-14) are required for the transformation of PC-M4 to penitrems A and E. Synthesis of these final products is proposed to proceed via penitrems D and C (PC-21, PC-05, PC-14) and penitrems B and F (PC-21, PC-05, PC-14, PC-23) (Probable).</text>
</comment>
<comment type="pathway">
    <text evidence="6">Secondary metabolite biosynthesis.</text>
</comment>
<comment type="subcellular location">
    <subcellularLocation>
        <location evidence="2">Membrane</location>
        <topology evidence="2">Multi-pass membrane protein</topology>
    </subcellularLocation>
</comment>
<comment type="similarity">
    <text evidence="5">Belongs to the membrane-bound ascI terpene cyclase family.</text>
</comment>
<protein>
    <recommendedName>
        <fullName evidence="1">Terpene cyclase penA</fullName>
        <ecNumber evidence="1">5.4.99.-</ecNumber>
    </recommendedName>
    <alternativeName>
        <fullName evidence="4">Penitrem biosynthesis cluster protein A</fullName>
    </alternativeName>
</protein>
<evidence type="ECO:0000250" key="1">
    <source>
        <dbReference type="UniProtKB" id="A0A455R4Z0"/>
    </source>
</evidence>
<evidence type="ECO:0000255" key="2"/>
<evidence type="ECO:0000269" key="3">
    <source>
    </source>
</evidence>
<evidence type="ECO:0000303" key="4">
    <source>
    </source>
</evidence>
<evidence type="ECO:0000305" key="5"/>
<evidence type="ECO:0000305" key="6">
    <source>
    </source>
</evidence>